<reference key="1">
    <citation type="journal article" date="2004" name="J. Bacteriol.">
        <title>Complete genome sequence of Rickettsia typhi and comparison with sequences of other Rickettsiae.</title>
        <authorList>
            <person name="McLeod M.P."/>
            <person name="Qin X."/>
            <person name="Karpathy S.E."/>
            <person name="Gioia J."/>
            <person name="Highlander S.K."/>
            <person name="Fox G.E."/>
            <person name="McNeill T.Z."/>
            <person name="Jiang H."/>
            <person name="Muzny D."/>
            <person name="Jacob L.S."/>
            <person name="Hawes A.C."/>
            <person name="Sodergren E."/>
            <person name="Gill R."/>
            <person name="Hume J."/>
            <person name="Morgan M."/>
            <person name="Fan G."/>
            <person name="Amin A.G."/>
            <person name="Gibbs R.A."/>
            <person name="Hong C."/>
            <person name="Yu X.-J."/>
            <person name="Walker D.H."/>
            <person name="Weinstock G.M."/>
        </authorList>
    </citation>
    <scope>NUCLEOTIDE SEQUENCE [LARGE SCALE GENOMIC DNA]</scope>
    <source>
        <strain>ATCC VR-144 / Wilmington</strain>
    </source>
</reference>
<organism>
    <name type="scientific">Rickettsia typhi (strain ATCC VR-144 / Wilmington)</name>
    <dbReference type="NCBI Taxonomy" id="257363"/>
    <lineage>
        <taxon>Bacteria</taxon>
        <taxon>Pseudomonadati</taxon>
        <taxon>Pseudomonadota</taxon>
        <taxon>Alphaproteobacteria</taxon>
        <taxon>Rickettsiales</taxon>
        <taxon>Rickettsiaceae</taxon>
        <taxon>Rickettsieae</taxon>
        <taxon>Rickettsia</taxon>
        <taxon>typhus group</taxon>
    </lineage>
</organism>
<evidence type="ECO:0000255" key="1">
    <source>
        <dbReference type="HAMAP-Rule" id="MF_00391"/>
    </source>
</evidence>
<evidence type="ECO:0000305" key="2"/>
<dbReference type="EMBL" id="AE017197">
    <property type="protein sequence ID" value="AAU04063.1"/>
    <property type="molecule type" value="Genomic_DNA"/>
</dbReference>
<dbReference type="RefSeq" id="WP_011191044.1">
    <property type="nucleotide sequence ID" value="NC_006142.1"/>
</dbReference>
<dbReference type="SMR" id="Q68WC9"/>
<dbReference type="KEGG" id="rty:RT0598"/>
<dbReference type="eggNOG" id="COG0230">
    <property type="taxonomic scope" value="Bacteria"/>
</dbReference>
<dbReference type="HOGENOM" id="CLU_129938_2_0_5"/>
<dbReference type="OrthoDB" id="9804164at2"/>
<dbReference type="Proteomes" id="UP000000604">
    <property type="component" value="Chromosome"/>
</dbReference>
<dbReference type="GO" id="GO:1990904">
    <property type="term" value="C:ribonucleoprotein complex"/>
    <property type="evidence" value="ECO:0007669"/>
    <property type="project" value="UniProtKB-KW"/>
</dbReference>
<dbReference type="GO" id="GO:0005840">
    <property type="term" value="C:ribosome"/>
    <property type="evidence" value="ECO:0007669"/>
    <property type="project" value="UniProtKB-KW"/>
</dbReference>
<dbReference type="GO" id="GO:0003735">
    <property type="term" value="F:structural constituent of ribosome"/>
    <property type="evidence" value="ECO:0007669"/>
    <property type="project" value="InterPro"/>
</dbReference>
<dbReference type="GO" id="GO:0006412">
    <property type="term" value="P:translation"/>
    <property type="evidence" value="ECO:0007669"/>
    <property type="project" value="UniProtKB-UniRule"/>
</dbReference>
<dbReference type="FunFam" id="1.10.287.3980:FF:000001">
    <property type="entry name" value="Mitochondrial ribosomal protein L34"/>
    <property type="match status" value="1"/>
</dbReference>
<dbReference type="Gene3D" id="1.10.287.3980">
    <property type="match status" value="1"/>
</dbReference>
<dbReference type="HAMAP" id="MF_00391">
    <property type="entry name" value="Ribosomal_bL34"/>
    <property type="match status" value="1"/>
</dbReference>
<dbReference type="InterPro" id="IPR000271">
    <property type="entry name" value="Ribosomal_bL34"/>
</dbReference>
<dbReference type="InterPro" id="IPR020939">
    <property type="entry name" value="Ribosomal_bL34_CS"/>
</dbReference>
<dbReference type="NCBIfam" id="TIGR01030">
    <property type="entry name" value="rpmH_bact"/>
    <property type="match status" value="1"/>
</dbReference>
<dbReference type="PANTHER" id="PTHR14503:SF4">
    <property type="entry name" value="LARGE RIBOSOMAL SUBUNIT PROTEIN BL34M"/>
    <property type="match status" value="1"/>
</dbReference>
<dbReference type="PANTHER" id="PTHR14503">
    <property type="entry name" value="MITOCHONDRIAL RIBOSOMAL PROTEIN 34 FAMILY MEMBER"/>
    <property type="match status" value="1"/>
</dbReference>
<dbReference type="Pfam" id="PF00468">
    <property type="entry name" value="Ribosomal_L34"/>
    <property type="match status" value="1"/>
</dbReference>
<dbReference type="PROSITE" id="PS00784">
    <property type="entry name" value="RIBOSOMAL_L34"/>
    <property type="match status" value="1"/>
</dbReference>
<keyword id="KW-0687">Ribonucleoprotein</keyword>
<keyword id="KW-0689">Ribosomal protein</keyword>
<proteinExistence type="inferred from homology"/>
<feature type="chain" id="PRO_0000187452" description="Large ribosomal subunit protein bL34">
    <location>
        <begin position="1"/>
        <end position="44"/>
    </location>
</feature>
<name>RL34_RICTY</name>
<protein>
    <recommendedName>
        <fullName evidence="1">Large ribosomal subunit protein bL34</fullName>
    </recommendedName>
    <alternativeName>
        <fullName evidence="2">50S ribosomal protein L34</fullName>
    </alternativeName>
</protein>
<comment type="similarity">
    <text evidence="1">Belongs to the bacterial ribosomal protein bL34 family.</text>
</comment>
<gene>
    <name evidence="1" type="primary">rpmH</name>
    <name type="ordered locus">RT0598</name>
</gene>
<sequence>MKRTFQPSNLVRKRRHGFRSRMITVTGRAILKKRRAKGRHKLSA</sequence>
<accession>Q68WC9</accession>